<reference key="1">
    <citation type="submission" date="2007-05" db="EMBL/GenBank/DDBJ databases">
        <title>Complete sequence of Geobacter uraniireducens Rf4.</title>
        <authorList>
            <consortium name="US DOE Joint Genome Institute"/>
            <person name="Copeland A."/>
            <person name="Lucas S."/>
            <person name="Lapidus A."/>
            <person name="Barry K."/>
            <person name="Detter J.C."/>
            <person name="Glavina del Rio T."/>
            <person name="Hammon N."/>
            <person name="Israni S."/>
            <person name="Dalin E."/>
            <person name="Tice H."/>
            <person name="Pitluck S."/>
            <person name="Chertkov O."/>
            <person name="Brettin T."/>
            <person name="Bruce D."/>
            <person name="Han C."/>
            <person name="Schmutz J."/>
            <person name="Larimer F."/>
            <person name="Land M."/>
            <person name="Hauser L."/>
            <person name="Kyrpides N."/>
            <person name="Mikhailova N."/>
            <person name="Shelobolina E."/>
            <person name="Aklujkar M."/>
            <person name="Lovley D."/>
            <person name="Richardson P."/>
        </authorList>
    </citation>
    <scope>NUCLEOTIDE SEQUENCE [LARGE SCALE GENOMIC DNA]</scope>
    <source>
        <strain>ATCC BAA-1134 / JCM 13001 / Rf4</strain>
    </source>
</reference>
<sequence length="139" mass="15737">MGETIRFGISIDETLLESFDKLIDQKGYMNRSEAIRDLIRASLVELKWEAGEEETVGTVTLVYNHHVRDLSDKLTEHQHTHHDQIISALHVHLDAHNCLEVLVVRGKAREVKQIADELIGVKGVKHGKLVMTTTGEELH</sequence>
<accession>A5GBR0</accession>
<proteinExistence type="inferred from homology"/>
<keyword id="KW-0238">DNA-binding</keyword>
<keyword id="KW-0479">Metal-binding</keyword>
<keyword id="KW-0533">Nickel</keyword>
<keyword id="KW-1185">Reference proteome</keyword>
<keyword id="KW-0804">Transcription</keyword>
<keyword id="KW-0805">Transcription regulation</keyword>
<dbReference type="EMBL" id="CP000698">
    <property type="protein sequence ID" value="ABQ24980.1"/>
    <property type="molecule type" value="Genomic_DNA"/>
</dbReference>
<dbReference type="RefSeq" id="WP_011937704.1">
    <property type="nucleotide sequence ID" value="NC_009483.1"/>
</dbReference>
<dbReference type="SMR" id="A5GBR0"/>
<dbReference type="STRING" id="351605.Gura_0772"/>
<dbReference type="KEGG" id="gur:Gura_0772"/>
<dbReference type="HOGENOM" id="CLU_113319_1_2_7"/>
<dbReference type="OrthoDB" id="9806294at2"/>
<dbReference type="Proteomes" id="UP000006695">
    <property type="component" value="Chromosome"/>
</dbReference>
<dbReference type="GO" id="GO:0003677">
    <property type="term" value="F:DNA binding"/>
    <property type="evidence" value="ECO:0007669"/>
    <property type="project" value="UniProtKB-KW"/>
</dbReference>
<dbReference type="GO" id="GO:0003700">
    <property type="term" value="F:DNA-binding transcription factor activity"/>
    <property type="evidence" value="ECO:0007669"/>
    <property type="project" value="UniProtKB-UniRule"/>
</dbReference>
<dbReference type="GO" id="GO:0016151">
    <property type="term" value="F:nickel cation binding"/>
    <property type="evidence" value="ECO:0007669"/>
    <property type="project" value="UniProtKB-UniRule"/>
</dbReference>
<dbReference type="GO" id="GO:0010045">
    <property type="term" value="P:response to nickel cation"/>
    <property type="evidence" value="ECO:0007669"/>
    <property type="project" value="InterPro"/>
</dbReference>
<dbReference type="CDD" id="cd22231">
    <property type="entry name" value="RHH_NikR_HicB-like"/>
    <property type="match status" value="1"/>
</dbReference>
<dbReference type="Gene3D" id="3.30.70.1150">
    <property type="entry name" value="ACT-like. Chain A, domain 2"/>
    <property type="match status" value="1"/>
</dbReference>
<dbReference type="Gene3D" id="1.10.1220.10">
    <property type="entry name" value="Met repressor-like"/>
    <property type="match status" value="1"/>
</dbReference>
<dbReference type="HAMAP" id="MF_00476">
    <property type="entry name" value="NikR"/>
    <property type="match status" value="1"/>
</dbReference>
<dbReference type="InterPro" id="IPR027271">
    <property type="entry name" value="Acetolactate_synth/TF_NikR_C"/>
</dbReference>
<dbReference type="InterPro" id="IPR045865">
    <property type="entry name" value="ACT-like_dom_sf"/>
</dbReference>
<dbReference type="InterPro" id="IPR013321">
    <property type="entry name" value="Arc_rbn_hlx_hlx"/>
</dbReference>
<dbReference type="InterPro" id="IPR002145">
    <property type="entry name" value="CopG"/>
</dbReference>
<dbReference type="InterPro" id="IPR050192">
    <property type="entry name" value="CopG/NikR_regulator"/>
</dbReference>
<dbReference type="InterPro" id="IPR022988">
    <property type="entry name" value="Ni_resp_reg_NikR"/>
</dbReference>
<dbReference type="InterPro" id="IPR010985">
    <property type="entry name" value="Ribbon_hlx_hlx"/>
</dbReference>
<dbReference type="InterPro" id="IPR014864">
    <property type="entry name" value="TF_NikR_Ni-bd_C"/>
</dbReference>
<dbReference type="NCBIfam" id="NF001884">
    <property type="entry name" value="PRK00630.1"/>
    <property type="match status" value="1"/>
</dbReference>
<dbReference type="NCBIfam" id="NF002169">
    <property type="entry name" value="PRK01002.1"/>
    <property type="match status" value="1"/>
</dbReference>
<dbReference type="NCBIfam" id="NF002815">
    <property type="entry name" value="PRK02967.1"/>
    <property type="match status" value="1"/>
</dbReference>
<dbReference type="NCBIfam" id="NF003381">
    <property type="entry name" value="PRK04460.1"/>
    <property type="match status" value="1"/>
</dbReference>
<dbReference type="PANTHER" id="PTHR34719">
    <property type="entry name" value="NICKEL-RESPONSIVE REGULATOR"/>
    <property type="match status" value="1"/>
</dbReference>
<dbReference type="PANTHER" id="PTHR34719:SF2">
    <property type="entry name" value="NICKEL-RESPONSIVE REGULATOR"/>
    <property type="match status" value="1"/>
</dbReference>
<dbReference type="Pfam" id="PF08753">
    <property type="entry name" value="NikR_C"/>
    <property type="match status" value="1"/>
</dbReference>
<dbReference type="Pfam" id="PF01402">
    <property type="entry name" value="RHH_1"/>
    <property type="match status" value="1"/>
</dbReference>
<dbReference type="SUPFAM" id="SSF55021">
    <property type="entry name" value="ACT-like"/>
    <property type="match status" value="1"/>
</dbReference>
<dbReference type="SUPFAM" id="SSF47598">
    <property type="entry name" value="Ribbon-helix-helix"/>
    <property type="match status" value="1"/>
</dbReference>
<gene>
    <name type="ordered locus">Gura_0772</name>
</gene>
<name>NIKR_GEOUR</name>
<comment type="function">
    <text evidence="1">Transcriptional regulator.</text>
</comment>
<comment type="cofactor">
    <cofactor evidence="1">
        <name>Ni(2+)</name>
        <dbReference type="ChEBI" id="CHEBI:49786"/>
    </cofactor>
    <text evidence="1">Binds 1 nickel ion per subunit.</text>
</comment>
<comment type="similarity">
    <text evidence="1">Belongs to the transcriptional regulatory CopG/NikR family.</text>
</comment>
<evidence type="ECO:0000255" key="1">
    <source>
        <dbReference type="HAMAP-Rule" id="MF_00476"/>
    </source>
</evidence>
<organism>
    <name type="scientific">Geotalea uraniireducens (strain Rf4)</name>
    <name type="common">Geobacter uraniireducens</name>
    <dbReference type="NCBI Taxonomy" id="351605"/>
    <lineage>
        <taxon>Bacteria</taxon>
        <taxon>Pseudomonadati</taxon>
        <taxon>Thermodesulfobacteriota</taxon>
        <taxon>Desulfuromonadia</taxon>
        <taxon>Geobacterales</taxon>
        <taxon>Geobacteraceae</taxon>
        <taxon>Geotalea</taxon>
    </lineage>
</organism>
<feature type="chain" id="PRO_1000081260" description="Putative nickel-responsive regulator">
    <location>
        <begin position="1"/>
        <end position="139"/>
    </location>
</feature>
<feature type="binding site" evidence="1">
    <location>
        <position position="79"/>
    </location>
    <ligand>
        <name>Ni(2+)</name>
        <dbReference type="ChEBI" id="CHEBI:49786"/>
    </ligand>
</feature>
<feature type="binding site" evidence="1">
    <location>
        <position position="90"/>
    </location>
    <ligand>
        <name>Ni(2+)</name>
        <dbReference type="ChEBI" id="CHEBI:49786"/>
    </ligand>
</feature>
<feature type="binding site" evidence="1">
    <location>
        <position position="92"/>
    </location>
    <ligand>
        <name>Ni(2+)</name>
        <dbReference type="ChEBI" id="CHEBI:49786"/>
    </ligand>
</feature>
<feature type="binding site" evidence="1">
    <location>
        <position position="98"/>
    </location>
    <ligand>
        <name>Ni(2+)</name>
        <dbReference type="ChEBI" id="CHEBI:49786"/>
    </ligand>
</feature>
<protein>
    <recommendedName>
        <fullName evidence="1">Putative nickel-responsive regulator</fullName>
    </recommendedName>
</protein>